<sequence length="271" mass="30484">MFSIQQPLLVFSDLDGTLLDSHSYDWQPAAPWLTRLREANVPVILCSSKTSAEMLYLQKTLGLQGLPLIAENGAVIQLAEQWQEIDGFPRIISGISHGEISQVLNTLREKEHFKFTTFDDVDDATITEWTGLSRSQAALTQLHEASVTLIWRDSDERMAQFTARLNELGLQFMQGARFWHVLDASAGKDQAANWIIATYQQLSGKRPTTLGLGDGPNDAPLLEVMDYAVIVKGLNREGVHLHDEDPARVWRTQREGPEGWREGLDHFFSAR</sequence>
<gene>
    <name type="primary">yedP</name>
    <name type="ordered locus">SDY_1051</name>
</gene>
<organism>
    <name type="scientific">Shigella dysenteriae serotype 1 (strain Sd197)</name>
    <dbReference type="NCBI Taxonomy" id="300267"/>
    <lineage>
        <taxon>Bacteria</taxon>
        <taxon>Pseudomonadati</taxon>
        <taxon>Pseudomonadota</taxon>
        <taxon>Gammaproteobacteria</taxon>
        <taxon>Enterobacterales</taxon>
        <taxon>Enterobacteriaceae</taxon>
        <taxon>Shigella</taxon>
    </lineage>
</organism>
<dbReference type="EC" id="3.1.3.70" evidence="1"/>
<dbReference type="EMBL" id="CP000034">
    <property type="protein sequence ID" value="ABB61216.1"/>
    <property type="molecule type" value="Genomic_DNA"/>
</dbReference>
<dbReference type="RefSeq" id="WP_000491523.1">
    <property type="nucleotide sequence ID" value="NC_007606.1"/>
</dbReference>
<dbReference type="RefSeq" id="YP_402707.1">
    <property type="nucleotide sequence ID" value="NC_007606.1"/>
</dbReference>
<dbReference type="SMR" id="Q32HI9"/>
<dbReference type="STRING" id="300267.SDY_1051"/>
<dbReference type="EnsemblBacteria" id="ABB61216">
    <property type="protein sequence ID" value="ABB61216"/>
    <property type="gene ID" value="SDY_1051"/>
</dbReference>
<dbReference type="KEGG" id="sdy:SDY_1051"/>
<dbReference type="PATRIC" id="fig|300267.13.peg.1228"/>
<dbReference type="HOGENOM" id="CLU_063016_1_0_6"/>
<dbReference type="Proteomes" id="UP000002716">
    <property type="component" value="Chromosome"/>
</dbReference>
<dbReference type="GO" id="GO:0005829">
    <property type="term" value="C:cytosol"/>
    <property type="evidence" value="ECO:0007669"/>
    <property type="project" value="TreeGrafter"/>
</dbReference>
<dbReference type="GO" id="GO:0000287">
    <property type="term" value="F:magnesium ion binding"/>
    <property type="evidence" value="ECO:0007669"/>
    <property type="project" value="UniProtKB-ARBA"/>
</dbReference>
<dbReference type="GO" id="GO:0050531">
    <property type="term" value="F:mannosyl-3-phosphoglycerate phosphatase activity"/>
    <property type="evidence" value="ECO:0007669"/>
    <property type="project" value="UniProtKB-UniRule"/>
</dbReference>
<dbReference type="GO" id="GO:0051479">
    <property type="term" value="P:mannosylglycerate biosynthetic process"/>
    <property type="evidence" value="ECO:0007669"/>
    <property type="project" value="InterPro"/>
</dbReference>
<dbReference type="CDD" id="cd07507">
    <property type="entry name" value="HAD_Pase"/>
    <property type="match status" value="1"/>
</dbReference>
<dbReference type="Gene3D" id="3.40.50.1000">
    <property type="entry name" value="HAD superfamily/HAD-like"/>
    <property type="match status" value="1"/>
</dbReference>
<dbReference type="Gene3D" id="3.30.980.20">
    <property type="entry name" value="Putative mannosyl-3-phosphoglycerate phosphatase, domain 2"/>
    <property type="match status" value="1"/>
</dbReference>
<dbReference type="HAMAP" id="MF_00617">
    <property type="entry name" value="MPGP_rel"/>
    <property type="match status" value="1"/>
</dbReference>
<dbReference type="InterPro" id="IPR036412">
    <property type="entry name" value="HAD-like_sf"/>
</dbReference>
<dbReference type="InterPro" id="IPR006381">
    <property type="entry name" value="HAD-SF-IIB-MPGP"/>
</dbReference>
<dbReference type="InterPro" id="IPR006379">
    <property type="entry name" value="HAD-SF_hydro_IIB"/>
</dbReference>
<dbReference type="InterPro" id="IPR023214">
    <property type="entry name" value="HAD_sf"/>
</dbReference>
<dbReference type="InterPro" id="IPR012815">
    <property type="entry name" value="MPG_Pase"/>
</dbReference>
<dbReference type="NCBIfam" id="TIGR01484">
    <property type="entry name" value="HAD-SF-IIB"/>
    <property type="match status" value="1"/>
</dbReference>
<dbReference type="NCBIfam" id="TIGR01486">
    <property type="entry name" value="HAD-SF-IIB-MPGP"/>
    <property type="match status" value="1"/>
</dbReference>
<dbReference type="NCBIfam" id="TIGR02463">
    <property type="entry name" value="MPGP_rel"/>
    <property type="match status" value="1"/>
</dbReference>
<dbReference type="NCBIfam" id="NF002976">
    <property type="entry name" value="PRK03669.1"/>
    <property type="match status" value="1"/>
</dbReference>
<dbReference type="PANTHER" id="PTHR10000:SF8">
    <property type="entry name" value="HAD SUPERFAMILY HYDROLASE-LIKE, TYPE 3"/>
    <property type="match status" value="1"/>
</dbReference>
<dbReference type="PANTHER" id="PTHR10000">
    <property type="entry name" value="PHOSPHOSERINE PHOSPHATASE"/>
    <property type="match status" value="1"/>
</dbReference>
<dbReference type="Pfam" id="PF08282">
    <property type="entry name" value="Hydrolase_3"/>
    <property type="match status" value="1"/>
</dbReference>
<dbReference type="SFLD" id="SFLDG01142">
    <property type="entry name" value="C2.B.2:_Mannosyl-3-phosphoglyc"/>
    <property type="match status" value="1"/>
</dbReference>
<dbReference type="SFLD" id="SFLDG01140">
    <property type="entry name" value="C2.B:_Phosphomannomutase_and_P"/>
    <property type="match status" value="1"/>
</dbReference>
<dbReference type="SUPFAM" id="SSF56784">
    <property type="entry name" value="HAD-like"/>
    <property type="match status" value="1"/>
</dbReference>
<keyword id="KW-0963">Cytoplasm</keyword>
<keyword id="KW-0378">Hydrolase</keyword>
<keyword id="KW-0460">Magnesium</keyword>
<keyword id="KW-0479">Metal-binding</keyword>
<keyword id="KW-1185">Reference proteome</keyword>
<reference key="1">
    <citation type="journal article" date="2005" name="Nucleic Acids Res.">
        <title>Genome dynamics and diversity of Shigella species, the etiologic agents of bacillary dysentery.</title>
        <authorList>
            <person name="Yang F."/>
            <person name="Yang J."/>
            <person name="Zhang X."/>
            <person name="Chen L."/>
            <person name="Jiang Y."/>
            <person name="Yan Y."/>
            <person name="Tang X."/>
            <person name="Wang J."/>
            <person name="Xiong Z."/>
            <person name="Dong J."/>
            <person name="Xue Y."/>
            <person name="Zhu Y."/>
            <person name="Xu X."/>
            <person name="Sun L."/>
            <person name="Chen S."/>
            <person name="Nie H."/>
            <person name="Peng J."/>
            <person name="Xu J."/>
            <person name="Wang Y."/>
            <person name="Yuan Z."/>
            <person name="Wen Y."/>
            <person name="Yao Z."/>
            <person name="Shen Y."/>
            <person name="Qiang B."/>
            <person name="Hou Y."/>
            <person name="Yu J."/>
            <person name="Jin Q."/>
        </authorList>
    </citation>
    <scope>NUCLEOTIDE SEQUENCE [LARGE SCALE GENOMIC DNA]</scope>
    <source>
        <strain>Sd197</strain>
    </source>
</reference>
<accession>Q32HI9</accession>
<comment type="catalytic activity">
    <reaction evidence="1">
        <text>2-O-(alpha-D-mannosyl)-3-phosphoglycerate + H2O = (2R)-2-O-(alpha-D-mannosyl)-glycerate + phosphate</text>
        <dbReference type="Rhea" id="RHEA:19309"/>
        <dbReference type="ChEBI" id="CHEBI:15377"/>
        <dbReference type="ChEBI" id="CHEBI:43474"/>
        <dbReference type="ChEBI" id="CHEBI:57541"/>
        <dbReference type="ChEBI" id="CHEBI:57744"/>
        <dbReference type="EC" id="3.1.3.70"/>
    </reaction>
</comment>
<comment type="cofactor">
    <cofactor evidence="1">
        <name>Mg(2+)</name>
        <dbReference type="ChEBI" id="CHEBI:18420"/>
    </cofactor>
</comment>
<comment type="subcellular location">
    <subcellularLocation>
        <location evidence="1">Cytoplasm</location>
    </subcellularLocation>
</comment>
<comment type="similarity">
    <text evidence="1">Belongs to the HAD-like hydrolase superfamily. MPGP family.</text>
</comment>
<feature type="chain" id="PRO_0000273962" description="Mannosyl-3-phosphoglycerate phosphatase">
    <location>
        <begin position="1"/>
        <end position="271"/>
    </location>
</feature>
<feature type="active site" description="Nucleophile" evidence="1">
    <location>
        <position position="13"/>
    </location>
</feature>
<feature type="binding site" evidence="1">
    <location>
        <position position="13"/>
    </location>
    <ligand>
        <name>Mg(2+)</name>
        <dbReference type="ChEBI" id="CHEBI:18420"/>
    </ligand>
</feature>
<feature type="binding site" evidence="1">
    <location>
        <position position="15"/>
    </location>
    <ligand>
        <name>Mg(2+)</name>
        <dbReference type="ChEBI" id="CHEBI:18420"/>
    </ligand>
</feature>
<feature type="binding site" evidence="1">
    <location>
        <position position="214"/>
    </location>
    <ligand>
        <name>Mg(2+)</name>
        <dbReference type="ChEBI" id="CHEBI:18420"/>
    </ligand>
</feature>
<evidence type="ECO:0000255" key="1">
    <source>
        <dbReference type="HAMAP-Rule" id="MF_00617"/>
    </source>
</evidence>
<protein>
    <recommendedName>
        <fullName evidence="1">Mannosyl-3-phosphoglycerate phosphatase</fullName>
        <shortName evidence="1">MPGP</shortName>
        <ecNumber evidence="1">3.1.3.70</ecNumber>
    </recommendedName>
</protein>
<proteinExistence type="inferred from homology"/>
<name>MPGP_SHIDS</name>